<feature type="chain" id="PRO_0000347363" description="Urease accessory protein UreG 1">
    <location>
        <begin position="1"/>
        <end position="208"/>
    </location>
</feature>
<feature type="binding site" evidence="1">
    <location>
        <begin position="14"/>
        <end position="21"/>
    </location>
    <ligand>
        <name>GTP</name>
        <dbReference type="ChEBI" id="CHEBI:37565"/>
    </ligand>
</feature>
<keyword id="KW-0143">Chaperone</keyword>
<keyword id="KW-0963">Cytoplasm</keyword>
<keyword id="KW-0342">GTP-binding</keyword>
<keyword id="KW-0996">Nickel insertion</keyword>
<keyword id="KW-0547">Nucleotide-binding</keyword>
<keyword id="KW-0843">Virulence</keyword>
<reference key="1">
    <citation type="journal article" date="2002" name="Proc. Natl. Acad. Sci. U.S.A.">
        <title>The Brucella suis genome reveals fundamental similarities between animal and plant pathogens and symbionts.</title>
        <authorList>
            <person name="Paulsen I.T."/>
            <person name="Seshadri R."/>
            <person name="Nelson K.E."/>
            <person name="Eisen J.A."/>
            <person name="Heidelberg J.F."/>
            <person name="Read T.D."/>
            <person name="Dodson R.J."/>
            <person name="Umayam L.A."/>
            <person name="Brinkac L.M."/>
            <person name="Beanan M.J."/>
            <person name="Daugherty S.C."/>
            <person name="DeBoy R.T."/>
            <person name="Durkin A.S."/>
            <person name="Kolonay J.F."/>
            <person name="Madupu R."/>
            <person name="Nelson W.C."/>
            <person name="Ayodeji B."/>
            <person name="Kraul M."/>
            <person name="Shetty J."/>
            <person name="Malek J.A."/>
            <person name="Van Aken S.E."/>
            <person name="Riedmuller S."/>
            <person name="Tettelin H."/>
            <person name="Gill S.R."/>
            <person name="White O."/>
            <person name="Salzberg S.L."/>
            <person name="Hoover D.L."/>
            <person name="Lindler L.E."/>
            <person name="Halling S.M."/>
            <person name="Boyle S.M."/>
            <person name="Fraser C.M."/>
        </authorList>
    </citation>
    <scope>NUCLEOTIDE SEQUENCE [LARGE SCALE GENOMIC DNA]</scope>
    <source>
        <strain>1330</strain>
    </source>
</reference>
<reference key="2">
    <citation type="journal article" date="2011" name="J. Bacteriol.">
        <title>Revised genome sequence of Brucella suis 1330.</title>
        <authorList>
            <person name="Tae H."/>
            <person name="Shallom S."/>
            <person name="Settlage R."/>
            <person name="Preston D."/>
            <person name="Adams L.G."/>
            <person name="Garner H.R."/>
        </authorList>
    </citation>
    <scope>NUCLEOTIDE SEQUENCE [LARGE SCALE GENOMIC DNA]</scope>
    <source>
        <strain>1330</strain>
    </source>
</reference>
<reference key="3">
    <citation type="journal article" date="2007" name="BMC Microbiol.">
        <title>Brucella suis urease encoded by ure1 but not ure2 is necessary for intestinal infection of BALB/c mice.</title>
        <authorList>
            <person name="Bandara A.B."/>
            <person name="Contreras A."/>
            <person name="Contreras-Rodriguez A."/>
            <person name="Martins A.M."/>
            <person name="Dobrean V."/>
            <person name="Poff-Reichow S."/>
            <person name="Rajasekaran P."/>
            <person name="Sriranganathan N."/>
            <person name="Schurig G.G."/>
            <person name="Boyle S.M."/>
        </authorList>
    </citation>
    <scope>OPERON DISRUPTION</scope>
    <scope>ROLE IN VIRULENCE</scope>
    <source>
        <strain>1330</strain>
    </source>
</reference>
<comment type="function">
    <text evidence="1">Facilitates the functional incorporation of the urease nickel metallocenter. This process requires GTP hydrolysis, probably effectuated by UreG.</text>
</comment>
<comment type="function">
    <text evidence="2">Disrupting the ure1 operon causes loss of urease activity, decreased resistance to low pH killing in vitro and decreased pathogen survival when inoculated in BALB/c mice by gavage.</text>
</comment>
<comment type="subunit">
    <text evidence="1">Homodimer. UreD, UreF and UreG form a complex that acts as a GTP-hydrolysis-dependent molecular chaperone, activating the urease apoprotein by helping to assemble the nickel containing metallocenter of UreC. The UreE protein probably delivers the nickel.</text>
</comment>
<comment type="subcellular location">
    <subcellularLocation>
        <location evidence="1">Cytoplasm</location>
    </subcellularLocation>
</comment>
<comment type="similarity">
    <text evidence="1">Belongs to the SIMIBI class G3E GTPase family. UreG subfamily.</text>
</comment>
<evidence type="ECO:0000255" key="1">
    <source>
        <dbReference type="HAMAP-Rule" id="MF_01389"/>
    </source>
</evidence>
<evidence type="ECO:0000269" key="2">
    <source>
    </source>
</evidence>
<name>UREG1_BRUSU</name>
<sequence>MTQKNGPLRVGIGGPVGSGKTTLTEKLCKAMRDKYSVAVITNDIYTQEDALILARRQALSEDRIIGVETGGCPHTAIREDASINLQAVVEMTRRFPDLDVVFIESGGDNLAATFSPDLADLTLYVISVCQGEEIPRKGGPGITRSDFLVINKSDLAPYVHVDLEVMEADAMRMRAKRPFGFTDLHRGKGVQEIIDFIVENGGLEPRSN</sequence>
<dbReference type="EMBL" id="AE014291">
    <property type="protein sequence ID" value="AAN29222.1"/>
    <property type="molecule type" value="Genomic_DNA"/>
</dbReference>
<dbReference type="EMBL" id="CP002997">
    <property type="protein sequence ID" value="AEM17635.1"/>
    <property type="molecule type" value="Genomic_DNA"/>
</dbReference>
<dbReference type="PIR" id="AC3458">
    <property type="entry name" value="AC3458"/>
</dbReference>
<dbReference type="SMR" id="Q8G2P5"/>
<dbReference type="KEGG" id="bms:BR0273"/>
<dbReference type="KEGG" id="bsi:BS1330_I0274"/>
<dbReference type="PATRIC" id="fig|204722.21.peg.1756"/>
<dbReference type="HOGENOM" id="CLU_072144_1_0_5"/>
<dbReference type="PhylomeDB" id="Q8G2P5"/>
<dbReference type="Proteomes" id="UP000007104">
    <property type="component" value="Chromosome I"/>
</dbReference>
<dbReference type="GO" id="GO:0005737">
    <property type="term" value="C:cytoplasm"/>
    <property type="evidence" value="ECO:0007669"/>
    <property type="project" value="UniProtKB-SubCell"/>
</dbReference>
<dbReference type="GO" id="GO:0005525">
    <property type="term" value="F:GTP binding"/>
    <property type="evidence" value="ECO:0007669"/>
    <property type="project" value="UniProtKB-KW"/>
</dbReference>
<dbReference type="GO" id="GO:0003924">
    <property type="term" value="F:GTPase activity"/>
    <property type="evidence" value="ECO:0007669"/>
    <property type="project" value="InterPro"/>
</dbReference>
<dbReference type="GO" id="GO:0016151">
    <property type="term" value="F:nickel cation binding"/>
    <property type="evidence" value="ECO:0007669"/>
    <property type="project" value="UniProtKB-UniRule"/>
</dbReference>
<dbReference type="GO" id="GO:0043419">
    <property type="term" value="P:urea catabolic process"/>
    <property type="evidence" value="ECO:0007669"/>
    <property type="project" value="InterPro"/>
</dbReference>
<dbReference type="CDD" id="cd05540">
    <property type="entry name" value="UreG"/>
    <property type="match status" value="1"/>
</dbReference>
<dbReference type="FunFam" id="3.40.50.300:FF:000208">
    <property type="entry name" value="Urease accessory protein UreG"/>
    <property type="match status" value="1"/>
</dbReference>
<dbReference type="Gene3D" id="3.40.50.300">
    <property type="entry name" value="P-loop containing nucleotide triphosphate hydrolases"/>
    <property type="match status" value="1"/>
</dbReference>
<dbReference type="HAMAP" id="MF_01389">
    <property type="entry name" value="UreG"/>
    <property type="match status" value="1"/>
</dbReference>
<dbReference type="InterPro" id="IPR003495">
    <property type="entry name" value="CobW/HypB/UreG_nucleotide-bd"/>
</dbReference>
<dbReference type="InterPro" id="IPR027417">
    <property type="entry name" value="P-loop_NTPase"/>
</dbReference>
<dbReference type="InterPro" id="IPR004400">
    <property type="entry name" value="UreG"/>
</dbReference>
<dbReference type="NCBIfam" id="TIGR00101">
    <property type="entry name" value="ureG"/>
    <property type="match status" value="1"/>
</dbReference>
<dbReference type="PANTHER" id="PTHR31715">
    <property type="entry name" value="UREASE ACCESSORY PROTEIN G"/>
    <property type="match status" value="1"/>
</dbReference>
<dbReference type="PANTHER" id="PTHR31715:SF0">
    <property type="entry name" value="UREASE ACCESSORY PROTEIN G"/>
    <property type="match status" value="1"/>
</dbReference>
<dbReference type="Pfam" id="PF02492">
    <property type="entry name" value="cobW"/>
    <property type="match status" value="1"/>
</dbReference>
<dbReference type="PIRSF" id="PIRSF005624">
    <property type="entry name" value="Ni-bind_GTPase"/>
    <property type="match status" value="1"/>
</dbReference>
<dbReference type="SUPFAM" id="SSF52540">
    <property type="entry name" value="P-loop containing nucleoside triphosphate hydrolases"/>
    <property type="match status" value="1"/>
</dbReference>
<gene>
    <name evidence="1" type="primary">ureG1</name>
    <name type="synonym">ureG-1</name>
    <name type="ordered locus">BR0273</name>
    <name type="ordered locus">BS1330_I0274</name>
</gene>
<proteinExistence type="inferred from homology"/>
<organism>
    <name type="scientific">Brucella suis biovar 1 (strain 1330)</name>
    <dbReference type="NCBI Taxonomy" id="204722"/>
    <lineage>
        <taxon>Bacteria</taxon>
        <taxon>Pseudomonadati</taxon>
        <taxon>Pseudomonadota</taxon>
        <taxon>Alphaproteobacteria</taxon>
        <taxon>Hyphomicrobiales</taxon>
        <taxon>Brucellaceae</taxon>
        <taxon>Brucella/Ochrobactrum group</taxon>
        <taxon>Brucella</taxon>
    </lineage>
</organism>
<accession>Q8G2P5</accession>
<accession>G0KBX2</accession>
<protein>
    <recommendedName>
        <fullName evidence="1">Urease accessory protein UreG 1</fullName>
    </recommendedName>
</protein>